<reference key="1">
    <citation type="journal article" date="2009" name="PLoS Genet.">
        <title>Organised genome dynamics in the Escherichia coli species results in highly diverse adaptive paths.</title>
        <authorList>
            <person name="Touchon M."/>
            <person name="Hoede C."/>
            <person name="Tenaillon O."/>
            <person name="Barbe V."/>
            <person name="Baeriswyl S."/>
            <person name="Bidet P."/>
            <person name="Bingen E."/>
            <person name="Bonacorsi S."/>
            <person name="Bouchier C."/>
            <person name="Bouvet O."/>
            <person name="Calteau A."/>
            <person name="Chiapello H."/>
            <person name="Clermont O."/>
            <person name="Cruveiller S."/>
            <person name="Danchin A."/>
            <person name="Diard M."/>
            <person name="Dossat C."/>
            <person name="Karoui M.E."/>
            <person name="Frapy E."/>
            <person name="Garry L."/>
            <person name="Ghigo J.M."/>
            <person name="Gilles A.M."/>
            <person name="Johnson J."/>
            <person name="Le Bouguenec C."/>
            <person name="Lescat M."/>
            <person name="Mangenot S."/>
            <person name="Martinez-Jehanne V."/>
            <person name="Matic I."/>
            <person name="Nassif X."/>
            <person name="Oztas S."/>
            <person name="Petit M.A."/>
            <person name="Pichon C."/>
            <person name="Rouy Z."/>
            <person name="Ruf C.S."/>
            <person name="Schneider D."/>
            <person name="Tourret J."/>
            <person name="Vacherie B."/>
            <person name="Vallenet D."/>
            <person name="Medigue C."/>
            <person name="Rocha E.P.C."/>
            <person name="Denamur E."/>
        </authorList>
    </citation>
    <scope>NUCLEOTIDE SEQUENCE [LARGE SCALE GENOMIC DNA]</scope>
    <source>
        <strain>UMN026 / ExPEC</strain>
    </source>
</reference>
<dbReference type="EC" id="3.5.1.108" evidence="1"/>
<dbReference type="EMBL" id="CU928163">
    <property type="protein sequence ID" value="CAR11319.1"/>
    <property type="molecule type" value="Genomic_DNA"/>
</dbReference>
<dbReference type="RefSeq" id="WP_000595482.1">
    <property type="nucleotide sequence ID" value="NC_011751.1"/>
</dbReference>
<dbReference type="RefSeq" id="YP_002410875.1">
    <property type="nucleotide sequence ID" value="NC_011751.1"/>
</dbReference>
<dbReference type="SMR" id="B7N7W9"/>
<dbReference type="STRING" id="585056.ECUMN_0096"/>
<dbReference type="GeneID" id="93777338"/>
<dbReference type="KEGG" id="eum:ECUMN_0096"/>
<dbReference type="PATRIC" id="fig|585056.7.peg.287"/>
<dbReference type="HOGENOM" id="CLU_046528_1_0_6"/>
<dbReference type="UniPathway" id="UPA00359">
    <property type="reaction ID" value="UER00478"/>
</dbReference>
<dbReference type="Proteomes" id="UP000007097">
    <property type="component" value="Chromosome"/>
</dbReference>
<dbReference type="GO" id="GO:0016020">
    <property type="term" value="C:membrane"/>
    <property type="evidence" value="ECO:0007669"/>
    <property type="project" value="GOC"/>
</dbReference>
<dbReference type="GO" id="GO:0046872">
    <property type="term" value="F:metal ion binding"/>
    <property type="evidence" value="ECO:0007669"/>
    <property type="project" value="UniProtKB-KW"/>
</dbReference>
<dbReference type="GO" id="GO:0103117">
    <property type="term" value="F:UDP-3-O-acyl-N-acetylglucosamine deacetylase activity"/>
    <property type="evidence" value="ECO:0007669"/>
    <property type="project" value="UniProtKB-UniRule"/>
</dbReference>
<dbReference type="GO" id="GO:0009245">
    <property type="term" value="P:lipid A biosynthetic process"/>
    <property type="evidence" value="ECO:0007669"/>
    <property type="project" value="UniProtKB-UniRule"/>
</dbReference>
<dbReference type="FunFam" id="3.30.1700.10:FF:000001">
    <property type="entry name" value="UDP-3-O-acyl-N-acetylglucosamine deacetylase"/>
    <property type="match status" value="1"/>
</dbReference>
<dbReference type="FunFam" id="3.30.230.20:FF:000001">
    <property type="entry name" value="UDP-3-O-acyl-N-acetylglucosamine deacetylase"/>
    <property type="match status" value="1"/>
</dbReference>
<dbReference type="Gene3D" id="3.30.230.20">
    <property type="entry name" value="lpxc deacetylase, domain 1"/>
    <property type="match status" value="1"/>
</dbReference>
<dbReference type="Gene3D" id="3.30.1700.10">
    <property type="entry name" value="lpxc deacetylase, domain 2"/>
    <property type="match status" value="1"/>
</dbReference>
<dbReference type="HAMAP" id="MF_00388">
    <property type="entry name" value="LpxC"/>
    <property type="match status" value="1"/>
</dbReference>
<dbReference type="InterPro" id="IPR020568">
    <property type="entry name" value="Ribosomal_Su5_D2-typ_SF"/>
</dbReference>
<dbReference type="InterPro" id="IPR004463">
    <property type="entry name" value="UDP-acyl_GlcNac_deAcase"/>
</dbReference>
<dbReference type="InterPro" id="IPR011334">
    <property type="entry name" value="UDP-acyl_GlcNac_deAcase_C"/>
</dbReference>
<dbReference type="InterPro" id="IPR015870">
    <property type="entry name" value="UDP-acyl_N-AcGlcN_deAcase_N"/>
</dbReference>
<dbReference type="NCBIfam" id="TIGR00325">
    <property type="entry name" value="lpxC"/>
    <property type="match status" value="1"/>
</dbReference>
<dbReference type="PANTHER" id="PTHR33694">
    <property type="entry name" value="UDP-3-O-ACYL-N-ACETYLGLUCOSAMINE DEACETYLASE 1, MITOCHONDRIAL-RELATED"/>
    <property type="match status" value="1"/>
</dbReference>
<dbReference type="PANTHER" id="PTHR33694:SF1">
    <property type="entry name" value="UDP-3-O-ACYL-N-ACETYLGLUCOSAMINE DEACETYLASE 1, MITOCHONDRIAL-RELATED"/>
    <property type="match status" value="1"/>
</dbReference>
<dbReference type="Pfam" id="PF03331">
    <property type="entry name" value="LpxC"/>
    <property type="match status" value="1"/>
</dbReference>
<dbReference type="SUPFAM" id="SSF54211">
    <property type="entry name" value="Ribosomal protein S5 domain 2-like"/>
    <property type="match status" value="2"/>
</dbReference>
<proteinExistence type="inferred from homology"/>
<comment type="function">
    <text evidence="1">Catalyzes the hydrolysis of UDP-3-O-myristoyl-N-acetylglucosamine to form UDP-3-O-myristoylglucosamine and acetate, the committed step in lipid A biosynthesis.</text>
</comment>
<comment type="catalytic activity">
    <reaction evidence="1">
        <text>a UDP-3-O-[(3R)-3-hydroxyacyl]-N-acetyl-alpha-D-glucosamine + H2O = a UDP-3-O-[(3R)-3-hydroxyacyl]-alpha-D-glucosamine + acetate</text>
        <dbReference type="Rhea" id="RHEA:67816"/>
        <dbReference type="ChEBI" id="CHEBI:15377"/>
        <dbReference type="ChEBI" id="CHEBI:30089"/>
        <dbReference type="ChEBI" id="CHEBI:137740"/>
        <dbReference type="ChEBI" id="CHEBI:173225"/>
        <dbReference type="EC" id="3.5.1.108"/>
    </reaction>
</comment>
<comment type="cofactor">
    <cofactor evidence="1">
        <name>Zn(2+)</name>
        <dbReference type="ChEBI" id="CHEBI:29105"/>
    </cofactor>
</comment>
<comment type="pathway">
    <text evidence="1">Glycolipid biosynthesis; lipid IV(A) biosynthesis; lipid IV(A) from (3R)-3-hydroxytetradecanoyl-[acyl-carrier-protein] and UDP-N-acetyl-alpha-D-glucosamine: step 2/6.</text>
</comment>
<comment type="similarity">
    <text evidence="1">Belongs to the LpxC family.</text>
</comment>
<keyword id="KW-0378">Hydrolase</keyword>
<keyword id="KW-0441">Lipid A biosynthesis</keyword>
<keyword id="KW-0444">Lipid biosynthesis</keyword>
<keyword id="KW-0443">Lipid metabolism</keyword>
<keyword id="KW-0479">Metal-binding</keyword>
<keyword id="KW-0862">Zinc</keyword>
<evidence type="ECO:0000255" key="1">
    <source>
        <dbReference type="HAMAP-Rule" id="MF_00388"/>
    </source>
</evidence>
<organism>
    <name type="scientific">Escherichia coli O17:K52:H18 (strain UMN026 / ExPEC)</name>
    <dbReference type="NCBI Taxonomy" id="585056"/>
    <lineage>
        <taxon>Bacteria</taxon>
        <taxon>Pseudomonadati</taxon>
        <taxon>Pseudomonadota</taxon>
        <taxon>Gammaproteobacteria</taxon>
        <taxon>Enterobacterales</taxon>
        <taxon>Enterobacteriaceae</taxon>
        <taxon>Escherichia</taxon>
    </lineage>
</organism>
<name>LPXC_ECOLU</name>
<accession>B7N7W9</accession>
<sequence>MIKQRTLKRIVQATGVGLHTGKKVTLTLRPAPANTGVIYRRTDLNPPVDFPADAKSVRDTMLCTCLVNEHDVRISTVEHLNAALAGLGIDNIVIEVNAPEIPIMDGSAAPFVYLLLDAGIDELNCAKKFVRIKETVRVEDGDKWAEFKPYNGFSLDFTIDFNHPAIDSSNQRYAMNFSADAFMRQISRARTFGFMRDIEYLQSRGLCLGGSFDCAIVVDDYRVLNEDGLRFEDEFVRHKMLDAIGDLFMCGHNIIGAFTAYKSGHALNNKLLQAVLAKQEAWEYVTFQDDAELPLAFKAPSAVLA</sequence>
<feature type="chain" id="PRO_1000122784" description="UDP-3-O-acyl-N-acetylglucosamine deacetylase">
    <location>
        <begin position="1"/>
        <end position="305"/>
    </location>
</feature>
<feature type="active site" description="Proton donor" evidence="1">
    <location>
        <position position="265"/>
    </location>
</feature>
<feature type="binding site" evidence="1">
    <location>
        <position position="79"/>
    </location>
    <ligand>
        <name>Zn(2+)</name>
        <dbReference type="ChEBI" id="CHEBI:29105"/>
    </ligand>
</feature>
<feature type="binding site" evidence="1">
    <location>
        <position position="238"/>
    </location>
    <ligand>
        <name>Zn(2+)</name>
        <dbReference type="ChEBI" id="CHEBI:29105"/>
    </ligand>
</feature>
<feature type="binding site" evidence="1">
    <location>
        <position position="242"/>
    </location>
    <ligand>
        <name>Zn(2+)</name>
        <dbReference type="ChEBI" id="CHEBI:29105"/>
    </ligand>
</feature>
<gene>
    <name evidence="1" type="primary">lpxC</name>
    <name type="ordered locus">ECUMN_0096</name>
</gene>
<protein>
    <recommendedName>
        <fullName evidence="1">UDP-3-O-acyl-N-acetylglucosamine deacetylase</fullName>
        <shortName evidence="1">UDP-3-O-acyl-GlcNAc deacetylase</shortName>
        <ecNumber evidence="1">3.5.1.108</ecNumber>
    </recommendedName>
    <alternativeName>
        <fullName evidence="1">UDP-3-O-[R-3-hydroxymyristoyl]-N-acetylglucosamine deacetylase</fullName>
    </alternativeName>
</protein>